<accession>Q8CXP5</accession>
<keyword id="KW-0143">Chaperone</keyword>
<keyword id="KW-0963">Cytoplasm</keyword>
<keyword id="KW-1015">Disulfide bond</keyword>
<keyword id="KW-0676">Redox-active center</keyword>
<keyword id="KW-1185">Reference proteome</keyword>
<keyword id="KW-0862">Zinc</keyword>
<sequence>MKDYLIKATANNGKIRAYAVQSTNTIEEARRRQDTFATASAALGRTITITAMMGAMLKGDDSITTKVMGNGPLGAIVADADADGHVRGYVTNPHVDFDLNDKGKLDVARAVGTEGNISVIKDLGLKDFFTGETPIVSGEISEDFTYYYATSEQLPSAVGAGVLVNPDHTILAAGGFIVQVMPGAEEEVINELEDQIQAIPAISSLIREGKSPEEILTQLFGEECLTIHEKMPIEFRCKCSKDRLAQAIIGLGNDEIQAMIEEDQGAEATCHFCNEKYHFTEEELEDLKQ</sequence>
<dbReference type="EMBL" id="BA000028">
    <property type="protein sequence ID" value="BAC12038.1"/>
    <property type="molecule type" value="Genomic_DNA"/>
</dbReference>
<dbReference type="RefSeq" id="WP_011064484.1">
    <property type="nucleotide sequence ID" value="NC_004193.1"/>
</dbReference>
<dbReference type="SMR" id="Q8CXP5"/>
<dbReference type="STRING" id="221109.gene:10732245"/>
<dbReference type="KEGG" id="oih:OB0082"/>
<dbReference type="eggNOG" id="COG1281">
    <property type="taxonomic scope" value="Bacteria"/>
</dbReference>
<dbReference type="HOGENOM" id="CLU_054493_1_0_9"/>
<dbReference type="OrthoDB" id="9776534at2"/>
<dbReference type="PhylomeDB" id="Q8CXP5"/>
<dbReference type="Proteomes" id="UP000000822">
    <property type="component" value="Chromosome"/>
</dbReference>
<dbReference type="GO" id="GO:0005737">
    <property type="term" value="C:cytoplasm"/>
    <property type="evidence" value="ECO:0007669"/>
    <property type="project" value="UniProtKB-SubCell"/>
</dbReference>
<dbReference type="GO" id="GO:0044183">
    <property type="term" value="F:protein folding chaperone"/>
    <property type="evidence" value="ECO:0007669"/>
    <property type="project" value="TreeGrafter"/>
</dbReference>
<dbReference type="GO" id="GO:0051082">
    <property type="term" value="F:unfolded protein binding"/>
    <property type="evidence" value="ECO:0007669"/>
    <property type="project" value="UniProtKB-UniRule"/>
</dbReference>
<dbReference type="GO" id="GO:0042026">
    <property type="term" value="P:protein refolding"/>
    <property type="evidence" value="ECO:0007669"/>
    <property type="project" value="TreeGrafter"/>
</dbReference>
<dbReference type="CDD" id="cd00498">
    <property type="entry name" value="Hsp33"/>
    <property type="match status" value="1"/>
</dbReference>
<dbReference type="Gene3D" id="3.55.30.10">
    <property type="entry name" value="Hsp33 domain"/>
    <property type="match status" value="1"/>
</dbReference>
<dbReference type="Gene3D" id="3.90.1280.10">
    <property type="entry name" value="HSP33 redox switch-like"/>
    <property type="match status" value="1"/>
</dbReference>
<dbReference type="HAMAP" id="MF_00117">
    <property type="entry name" value="HslO"/>
    <property type="match status" value="1"/>
</dbReference>
<dbReference type="InterPro" id="IPR000397">
    <property type="entry name" value="Heat_shock_Hsp33"/>
</dbReference>
<dbReference type="InterPro" id="IPR016154">
    <property type="entry name" value="Heat_shock_Hsp33_C"/>
</dbReference>
<dbReference type="InterPro" id="IPR016153">
    <property type="entry name" value="Heat_shock_Hsp33_N"/>
</dbReference>
<dbReference type="NCBIfam" id="NF001033">
    <property type="entry name" value="PRK00114.1"/>
    <property type="match status" value="1"/>
</dbReference>
<dbReference type="PANTHER" id="PTHR30111">
    <property type="entry name" value="33 KDA CHAPERONIN"/>
    <property type="match status" value="1"/>
</dbReference>
<dbReference type="PANTHER" id="PTHR30111:SF1">
    <property type="entry name" value="33 KDA CHAPERONIN"/>
    <property type="match status" value="1"/>
</dbReference>
<dbReference type="Pfam" id="PF01430">
    <property type="entry name" value="HSP33"/>
    <property type="match status" value="1"/>
</dbReference>
<dbReference type="PIRSF" id="PIRSF005261">
    <property type="entry name" value="Heat_shock_Hsp33"/>
    <property type="match status" value="1"/>
</dbReference>
<dbReference type="SUPFAM" id="SSF64397">
    <property type="entry name" value="Hsp33 domain"/>
    <property type="match status" value="1"/>
</dbReference>
<dbReference type="SUPFAM" id="SSF118352">
    <property type="entry name" value="HSP33 redox switch-like"/>
    <property type="match status" value="1"/>
</dbReference>
<proteinExistence type="inferred from homology"/>
<name>HSLO_OCEIH</name>
<comment type="function">
    <text evidence="1">Redox regulated molecular chaperone. Protects both thermally unfolding and oxidatively damaged proteins from irreversible aggregation. Plays an important role in the bacterial defense system toward oxidative stress.</text>
</comment>
<comment type="subcellular location">
    <subcellularLocation>
        <location evidence="1">Cytoplasm</location>
    </subcellularLocation>
</comment>
<comment type="PTM">
    <text evidence="1">Under oxidizing conditions two disulfide bonds are formed involving the reactive cysteines. Under reducing conditions zinc is bound to the reactive cysteines and the protein is inactive.</text>
</comment>
<comment type="similarity">
    <text evidence="1">Belongs to the HSP33 family.</text>
</comment>
<evidence type="ECO:0000255" key="1">
    <source>
        <dbReference type="HAMAP-Rule" id="MF_00117"/>
    </source>
</evidence>
<organism>
    <name type="scientific">Oceanobacillus iheyensis (strain DSM 14371 / CIP 107618 / JCM 11309 / KCTC 3954 / HTE831)</name>
    <dbReference type="NCBI Taxonomy" id="221109"/>
    <lineage>
        <taxon>Bacteria</taxon>
        <taxon>Bacillati</taxon>
        <taxon>Bacillota</taxon>
        <taxon>Bacilli</taxon>
        <taxon>Bacillales</taxon>
        <taxon>Bacillaceae</taxon>
        <taxon>Oceanobacillus</taxon>
    </lineage>
</organism>
<feature type="chain" id="PRO_0000192188" description="33 kDa chaperonin">
    <location>
        <begin position="1"/>
        <end position="289"/>
    </location>
</feature>
<feature type="disulfide bond" description="Redox-active" evidence="1">
    <location>
        <begin position="237"/>
        <end position="239"/>
    </location>
</feature>
<feature type="disulfide bond" description="Redox-active" evidence="1">
    <location>
        <begin position="270"/>
        <end position="273"/>
    </location>
</feature>
<protein>
    <recommendedName>
        <fullName evidence="1">33 kDa chaperonin</fullName>
    </recommendedName>
    <alternativeName>
        <fullName evidence="1">Heat shock protein 33 homolog</fullName>
        <shortName evidence="1">HSP33</shortName>
    </alternativeName>
</protein>
<gene>
    <name evidence="1" type="primary">hslO</name>
    <name type="ordered locus">OB0082</name>
</gene>
<reference key="1">
    <citation type="journal article" date="2002" name="Nucleic Acids Res.">
        <title>Genome sequence of Oceanobacillus iheyensis isolated from the Iheya Ridge and its unexpected adaptive capabilities to extreme environments.</title>
        <authorList>
            <person name="Takami H."/>
            <person name="Takaki Y."/>
            <person name="Uchiyama I."/>
        </authorList>
    </citation>
    <scope>NUCLEOTIDE SEQUENCE [LARGE SCALE GENOMIC DNA]</scope>
    <source>
        <strain>DSM 14371 / CIP 107618 / JCM 11309 / KCTC 3954 / HTE831</strain>
    </source>
</reference>